<feature type="chain" id="PRO_0000097226" description="Meiotic recombination protein rec7">
    <location>
        <begin position="1"/>
        <end position="339"/>
    </location>
</feature>
<sequence>MNIFPIVKYSVAEDSYTTDSSHINWSHYSDGGFTLSLTSGLLQIRQHEELIQSINLLDLWHQLIPGTKEKCLTLLSRAPCMNIRAFTNNVMKRFQVKFPSDVHYMKAKVEFEKLGLVFKDAKSSSEKKQFNNSQSQSNNSQELSLMNNAYNKSSAQQPNLLLQPSYIPMTQTATTAVNNSTNYVNPAPLQHVMPNAEIFSNTPPLKRFRGDAGMTQMPLRSDTSIESITASQQPTWDENVVITSSPFNPNRNAYSYGANSQYPIIAATPLNSQTQASWVAQPENQAYANLIPSPPTTSQILPTELTEEEKQLRSKVLFYLKQDSFIQLCQSLERVWNKM</sequence>
<dbReference type="EMBL" id="M85297">
    <property type="protein sequence ID" value="AAA35333.2"/>
    <property type="molecule type" value="Genomic_DNA"/>
</dbReference>
<dbReference type="EMBL" id="CU329672">
    <property type="protein sequence ID" value="CAA22777.1"/>
    <property type="molecule type" value="Genomic_DNA"/>
</dbReference>
<dbReference type="PIR" id="T41126">
    <property type="entry name" value="T41126"/>
</dbReference>
<dbReference type="PIR" id="T45217">
    <property type="entry name" value="T45217"/>
</dbReference>
<dbReference type="RefSeq" id="NP_588229.1">
    <property type="nucleotide sequence ID" value="NM_001023219.2"/>
</dbReference>
<dbReference type="BioGRID" id="275896">
    <property type="interactions" value="14"/>
</dbReference>
<dbReference type="STRING" id="284812.P36625"/>
<dbReference type="PaxDb" id="4896-SPCC1753.03c.1"/>
<dbReference type="EnsemblFungi" id="SPCC1753.03c.1">
    <property type="protein sequence ID" value="SPCC1753.03c.1:pep"/>
    <property type="gene ID" value="SPCC1753.03c"/>
</dbReference>
<dbReference type="GeneID" id="2539330"/>
<dbReference type="KEGG" id="spo:2539330"/>
<dbReference type="PomBase" id="SPCC1753.03c">
    <property type="gene designation" value="rec7"/>
</dbReference>
<dbReference type="VEuPathDB" id="FungiDB:SPCC1753.03c"/>
<dbReference type="HOGENOM" id="CLU_062076_0_0_1"/>
<dbReference type="InParanoid" id="P36625"/>
<dbReference type="OMA" id="DSSHINW"/>
<dbReference type="PRO" id="PR:P36625"/>
<dbReference type="Proteomes" id="UP000002485">
    <property type="component" value="Chromosome III"/>
</dbReference>
<dbReference type="GO" id="GO:0030998">
    <property type="term" value="C:linear element"/>
    <property type="evidence" value="ECO:0000314"/>
    <property type="project" value="PomBase"/>
</dbReference>
<dbReference type="GO" id="GO:0005634">
    <property type="term" value="C:nucleus"/>
    <property type="evidence" value="ECO:0000314"/>
    <property type="project" value="PomBase"/>
</dbReference>
<dbReference type="GO" id="GO:0031619">
    <property type="term" value="P:homologous chromosome orientation in meiotic metaphase I"/>
    <property type="evidence" value="ECO:0000315"/>
    <property type="project" value="PomBase"/>
</dbReference>
<dbReference type="GO" id="GO:0007131">
    <property type="term" value="P:reciprocal meiotic recombination"/>
    <property type="evidence" value="ECO:0000315"/>
    <property type="project" value="PomBase"/>
</dbReference>
<dbReference type="InterPro" id="IPR004354">
    <property type="entry name" value="Meiotic_Rec114"/>
</dbReference>
<dbReference type="Pfam" id="PF03525">
    <property type="entry name" value="Meiotic_rec114"/>
    <property type="match status" value="1"/>
</dbReference>
<keyword id="KW-0469">Meiosis</keyword>
<keyword id="KW-1185">Reference proteome</keyword>
<protein>
    <recommendedName>
        <fullName>Meiotic recombination protein rec7</fullName>
    </recommendedName>
</protein>
<name>REC7_SCHPO</name>
<gene>
    <name type="primary">rec7</name>
    <name type="ORF">SPCC1753.03c</name>
</gene>
<organism>
    <name type="scientific">Schizosaccharomyces pombe (strain 972 / ATCC 24843)</name>
    <name type="common">Fission yeast</name>
    <dbReference type="NCBI Taxonomy" id="284812"/>
    <lineage>
        <taxon>Eukaryota</taxon>
        <taxon>Fungi</taxon>
        <taxon>Dikarya</taxon>
        <taxon>Ascomycota</taxon>
        <taxon>Taphrinomycotina</taxon>
        <taxon>Schizosaccharomycetes</taxon>
        <taxon>Schizosaccharomycetales</taxon>
        <taxon>Schizosaccharomycetaceae</taxon>
        <taxon>Schizosaccharomyces</taxon>
    </lineage>
</organism>
<accession>P36625</accession>
<accession>Q9URT6</accession>
<comment type="function">
    <text>May be involved primarily in the early steps of meiotic recombination.</text>
</comment>
<comment type="developmental stage">
    <text>Abundant at 3 hours after induction of meiosis but undetectable before induction or at 4 hours and later.</text>
</comment>
<proteinExistence type="evidence at transcript level"/>
<reference key="1">
    <citation type="journal article" date="1992" name="Genetics">
        <title>Meiotically induced rec7 and rec8 genes of Schizosaccharomyces pombe.</title>
        <authorList>
            <person name="Lin Y."/>
            <person name="Larson K.L."/>
            <person name="Dorer R."/>
            <person name="Smith G.R."/>
        </authorList>
    </citation>
    <scope>NUCLEOTIDE SEQUENCE [GENOMIC DNA]</scope>
</reference>
<reference key="2">
    <citation type="journal article" date="2002" name="Nature">
        <title>The genome sequence of Schizosaccharomyces pombe.</title>
        <authorList>
            <person name="Wood V."/>
            <person name="Gwilliam R."/>
            <person name="Rajandream M.A."/>
            <person name="Lyne M.H."/>
            <person name="Lyne R."/>
            <person name="Stewart A."/>
            <person name="Sgouros J.G."/>
            <person name="Peat N."/>
            <person name="Hayles J."/>
            <person name="Baker S.G."/>
            <person name="Basham D."/>
            <person name="Bowman S."/>
            <person name="Brooks K."/>
            <person name="Brown D."/>
            <person name="Brown S."/>
            <person name="Chillingworth T."/>
            <person name="Churcher C.M."/>
            <person name="Collins M."/>
            <person name="Connor R."/>
            <person name="Cronin A."/>
            <person name="Davis P."/>
            <person name="Feltwell T."/>
            <person name="Fraser A."/>
            <person name="Gentles S."/>
            <person name="Goble A."/>
            <person name="Hamlin N."/>
            <person name="Harris D.E."/>
            <person name="Hidalgo J."/>
            <person name="Hodgson G."/>
            <person name="Holroyd S."/>
            <person name="Hornsby T."/>
            <person name="Howarth S."/>
            <person name="Huckle E.J."/>
            <person name="Hunt S."/>
            <person name="Jagels K."/>
            <person name="James K.D."/>
            <person name="Jones L."/>
            <person name="Jones M."/>
            <person name="Leather S."/>
            <person name="McDonald S."/>
            <person name="McLean J."/>
            <person name="Mooney P."/>
            <person name="Moule S."/>
            <person name="Mungall K.L."/>
            <person name="Murphy L.D."/>
            <person name="Niblett D."/>
            <person name="Odell C."/>
            <person name="Oliver K."/>
            <person name="O'Neil S."/>
            <person name="Pearson D."/>
            <person name="Quail M.A."/>
            <person name="Rabbinowitsch E."/>
            <person name="Rutherford K.M."/>
            <person name="Rutter S."/>
            <person name="Saunders D."/>
            <person name="Seeger K."/>
            <person name="Sharp S."/>
            <person name="Skelton J."/>
            <person name="Simmonds M.N."/>
            <person name="Squares R."/>
            <person name="Squares S."/>
            <person name="Stevens K."/>
            <person name="Taylor K."/>
            <person name="Taylor R.G."/>
            <person name="Tivey A."/>
            <person name="Walsh S.V."/>
            <person name="Warren T."/>
            <person name="Whitehead S."/>
            <person name="Woodward J.R."/>
            <person name="Volckaert G."/>
            <person name="Aert R."/>
            <person name="Robben J."/>
            <person name="Grymonprez B."/>
            <person name="Weltjens I."/>
            <person name="Vanstreels E."/>
            <person name="Rieger M."/>
            <person name="Schaefer M."/>
            <person name="Mueller-Auer S."/>
            <person name="Gabel C."/>
            <person name="Fuchs M."/>
            <person name="Duesterhoeft A."/>
            <person name="Fritzc C."/>
            <person name="Holzer E."/>
            <person name="Moestl D."/>
            <person name="Hilbert H."/>
            <person name="Borzym K."/>
            <person name="Langer I."/>
            <person name="Beck A."/>
            <person name="Lehrach H."/>
            <person name="Reinhardt R."/>
            <person name="Pohl T.M."/>
            <person name="Eger P."/>
            <person name="Zimmermann W."/>
            <person name="Wedler H."/>
            <person name="Wambutt R."/>
            <person name="Purnelle B."/>
            <person name="Goffeau A."/>
            <person name="Cadieu E."/>
            <person name="Dreano S."/>
            <person name="Gloux S."/>
            <person name="Lelaure V."/>
            <person name="Mottier S."/>
            <person name="Galibert F."/>
            <person name="Aves S.J."/>
            <person name="Xiang Z."/>
            <person name="Hunt C."/>
            <person name="Moore K."/>
            <person name="Hurst S.M."/>
            <person name="Lucas M."/>
            <person name="Rochet M."/>
            <person name="Gaillardin C."/>
            <person name="Tallada V.A."/>
            <person name="Garzon A."/>
            <person name="Thode G."/>
            <person name="Daga R.R."/>
            <person name="Cruzado L."/>
            <person name="Jimenez J."/>
            <person name="Sanchez M."/>
            <person name="del Rey F."/>
            <person name="Benito J."/>
            <person name="Dominguez A."/>
            <person name="Revuelta J.L."/>
            <person name="Moreno S."/>
            <person name="Armstrong J."/>
            <person name="Forsburg S.L."/>
            <person name="Cerutti L."/>
            <person name="Lowe T."/>
            <person name="McCombie W.R."/>
            <person name="Paulsen I."/>
            <person name="Potashkin J."/>
            <person name="Shpakovski G.V."/>
            <person name="Ussery D."/>
            <person name="Barrell B.G."/>
            <person name="Nurse P."/>
        </authorList>
    </citation>
    <scope>NUCLEOTIDE SEQUENCE [LARGE SCALE GENOMIC DNA]</scope>
    <source>
        <strain>972 / ATCC 24843</strain>
    </source>
</reference>